<accession>Q6LUH2</accession>
<gene>
    <name evidence="1" type="primary">deoB</name>
    <name type="ordered locus">PBPRA0632</name>
</gene>
<evidence type="ECO:0000255" key="1">
    <source>
        <dbReference type="HAMAP-Rule" id="MF_00740"/>
    </source>
</evidence>
<feature type="chain" id="PRO_0000258297" description="Phosphopentomutase">
    <location>
        <begin position="1"/>
        <end position="406"/>
    </location>
</feature>
<feature type="binding site" evidence="1">
    <location>
        <position position="10"/>
    </location>
    <ligand>
        <name>Mn(2+)</name>
        <dbReference type="ChEBI" id="CHEBI:29035"/>
        <label>1</label>
    </ligand>
</feature>
<feature type="binding site" evidence="1">
    <location>
        <position position="305"/>
    </location>
    <ligand>
        <name>Mn(2+)</name>
        <dbReference type="ChEBI" id="CHEBI:29035"/>
        <label>2</label>
    </ligand>
</feature>
<feature type="binding site" evidence="1">
    <location>
        <position position="310"/>
    </location>
    <ligand>
        <name>Mn(2+)</name>
        <dbReference type="ChEBI" id="CHEBI:29035"/>
        <label>2</label>
    </ligand>
</feature>
<feature type="binding site" evidence="1">
    <location>
        <position position="346"/>
    </location>
    <ligand>
        <name>Mn(2+)</name>
        <dbReference type="ChEBI" id="CHEBI:29035"/>
        <label>1</label>
    </ligand>
</feature>
<feature type="binding site" evidence="1">
    <location>
        <position position="347"/>
    </location>
    <ligand>
        <name>Mn(2+)</name>
        <dbReference type="ChEBI" id="CHEBI:29035"/>
        <label>1</label>
    </ligand>
</feature>
<feature type="binding site" evidence="1">
    <location>
        <position position="358"/>
    </location>
    <ligand>
        <name>Mn(2+)</name>
        <dbReference type="ChEBI" id="CHEBI:29035"/>
        <label>2</label>
    </ligand>
</feature>
<reference key="1">
    <citation type="journal article" date="2005" name="Science">
        <title>Life at depth: Photobacterium profundum genome sequence and expression analysis.</title>
        <authorList>
            <person name="Vezzi A."/>
            <person name="Campanaro S."/>
            <person name="D'Angelo M."/>
            <person name="Simonato F."/>
            <person name="Vitulo N."/>
            <person name="Lauro F.M."/>
            <person name="Cestaro A."/>
            <person name="Malacrida G."/>
            <person name="Simionati B."/>
            <person name="Cannata N."/>
            <person name="Romualdi C."/>
            <person name="Bartlett D.H."/>
            <person name="Valle G."/>
        </authorList>
    </citation>
    <scope>NUCLEOTIDE SEQUENCE [LARGE SCALE GENOMIC DNA]</scope>
    <source>
        <strain>ATCC BAA-1253 / SS9</strain>
    </source>
</reference>
<protein>
    <recommendedName>
        <fullName evidence="1">Phosphopentomutase</fullName>
        <ecNumber evidence="1">5.4.2.7</ecNumber>
    </recommendedName>
    <alternativeName>
        <fullName evidence="1">Phosphodeoxyribomutase</fullName>
    </alternativeName>
</protein>
<organism>
    <name type="scientific">Photobacterium profundum (strain SS9)</name>
    <dbReference type="NCBI Taxonomy" id="298386"/>
    <lineage>
        <taxon>Bacteria</taxon>
        <taxon>Pseudomonadati</taxon>
        <taxon>Pseudomonadota</taxon>
        <taxon>Gammaproteobacteria</taxon>
        <taxon>Vibrionales</taxon>
        <taxon>Vibrionaceae</taxon>
        <taxon>Photobacterium</taxon>
    </lineage>
</organism>
<dbReference type="EC" id="5.4.2.7" evidence="1"/>
<dbReference type="EMBL" id="CR378664">
    <property type="protein sequence ID" value="CAG19053.1"/>
    <property type="molecule type" value="Genomic_DNA"/>
</dbReference>
<dbReference type="RefSeq" id="WP_011217402.1">
    <property type="nucleotide sequence ID" value="NC_006370.1"/>
</dbReference>
<dbReference type="SMR" id="Q6LUH2"/>
<dbReference type="STRING" id="298386.PBPRA0632"/>
<dbReference type="KEGG" id="ppr:PBPRA0632"/>
<dbReference type="eggNOG" id="COG1015">
    <property type="taxonomic scope" value="Bacteria"/>
</dbReference>
<dbReference type="HOGENOM" id="CLU_053861_0_0_6"/>
<dbReference type="UniPathway" id="UPA00002">
    <property type="reaction ID" value="UER00467"/>
</dbReference>
<dbReference type="Proteomes" id="UP000000593">
    <property type="component" value="Chromosome 1"/>
</dbReference>
<dbReference type="GO" id="GO:0005829">
    <property type="term" value="C:cytosol"/>
    <property type="evidence" value="ECO:0007669"/>
    <property type="project" value="TreeGrafter"/>
</dbReference>
<dbReference type="GO" id="GO:0000287">
    <property type="term" value="F:magnesium ion binding"/>
    <property type="evidence" value="ECO:0007669"/>
    <property type="project" value="InterPro"/>
</dbReference>
<dbReference type="GO" id="GO:0030145">
    <property type="term" value="F:manganese ion binding"/>
    <property type="evidence" value="ECO:0007669"/>
    <property type="project" value="UniProtKB-UniRule"/>
</dbReference>
<dbReference type="GO" id="GO:0008973">
    <property type="term" value="F:phosphopentomutase activity"/>
    <property type="evidence" value="ECO:0007669"/>
    <property type="project" value="UniProtKB-UniRule"/>
</dbReference>
<dbReference type="GO" id="GO:0006018">
    <property type="term" value="P:2-deoxyribose 1-phosphate catabolic process"/>
    <property type="evidence" value="ECO:0007669"/>
    <property type="project" value="UniProtKB-UniRule"/>
</dbReference>
<dbReference type="GO" id="GO:0006015">
    <property type="term" value="P:5-phosphoribose 1-diphosphate biosynthetic process"/>
    <property type="evidence" value="ECO:0007669"/>
    <property type="project" value="UniProtKB-UniPathway"/>
</dbReference>
<dbReference type="GO" id="GO:0043094">
    <property type="term" value="P:metabolic compound salvage"/>
    <property type="evidence" value="ECO:0007669"/>
    <property type="project" value="InterPro"/>
</dbReference>
<dbReference type="GO" id="GO:0009117">
    <property type="term" value="P:nucleotide metabolic process"/>
    <property type="evidence" value="ECO:0007669"/>
    <property type="project" value="InterPro"/>
</dbReference>
<dbReference type="CDD" id="cd16009">
    <property type="entry name" value="PPM"/>
    <property type="match status" value="1"/>
</dbReference>
<dbReference type="FunFam" id="3.30.70.1250:FF:000001">
    <property type="entry name" value="Phosphopentomutase"/>
    <property type="match status" value="1"/>
</dbReference>
<dbReference type="Gene3D" id="3.40.720.10">
    <property type="entry name" value="Alkaline Phosphatase, subunit A"/>
    <property type="match status" value="1"/>
</dbReference>
<dbReference type="Gene3D" id="3.30.70.1250">
    <property type="entry name" value="Phosphopentomutase"/>
    <property type="match status" value="1"/>
</dbReference>
<dbReference type="HAMAP" id="MF_00740">
    <property type="entry name" value="Phosphopentomut"/>
    <property type="match status" value="1"/>
</dbReference>
<dbReference type="InterPro" id="IPR017850">
    <property type="entry name" value="Alkaline_phosphatase_core_sf"/>
</dbReference>
<dbReference type="InterPro" id="IPR010045">
    <property type="entry name" value="DeoB"/>
</dbReference>
<dbReference type="InterPro" id="IPR006124">
    <property type="entry name" value="Metalloenzyme"/>
</dbReference>
<dbReference type="InterPro" id="IPR024052">
    <property type="entry name" value="Phosphopentomutase_DeoB_cap_sf"/>
</dbReference>
<dbReference type="NCBIfam" id="TIGR01696">
    <property type="entry name" value="deoB"/>
    <property type="match status" value="1"/>
</dbReference>
<dbReference type="NCBIfam" id="NF003766">
    <property type="entry name" value="PRK05362.1"/>
    <property type="match status" value="1"/>
</dbReference>
<dbReference type="PANTHER" id="PTHR21110">
    <property type="entry name" value="PHOSPHOPENTOMUTASE"/>
    <property type="match status" value="1"/>
</dbReference>
<dbReference type="PANTHER" id="PTHR21110:SF0">
    <property type="entry name" value="PHOSPHOPENTOMUTASE"/>
    <property type="match status" value="1"/>
</dbReference>
<dbReference type="Pfam" id="PF01676">
    <property type="entry name" value="Metalloenzyme"/>
    <property type="match status" value="1"/>
</dbReference>
<dbReference type="PIRSF" id="PIRSF001491">
    <property type="entry name" value="Ppentomutase"/>
    <property type="match status" value="1"/>
</dbReference>
<dbReference type="SUPFAM" id="SSF53649">
    <property type="entry name" value="Alkaline phosphatase-like"/>
    <property type="match status" value="1"/>
</dbReference>
<dbReference type="SUPFAM" id="SSF143856">
    <property type="entry name" value="DeoB insert domain-like"/>
    <property type="match status" value="1"/>
</dbReference>
<sequence length="406" mass="44118">MKRSIILVLDSFGIGATEDAVDFGDVGSNTMGHIAQACARGEADNGDRSGPLHLPNLNKLGLGKACEESSGYFPEGLDPNVEITGAYGHAKELSSGKDTPSGHWEIAGVPVLFDWGYFSDHDNSFPKELTDRILKRANLPGFLGNCHASGTHVLDELGEEHMKTGMPIFYTSADSVFQIACHEETFGLDNLLTLCQIAREELEDYNIGRVIARPFTGPGKGQFERTGNRRDLSLEPPATTVLQKLVDEKGGDVISIGKISDIYAGCGITKKVKANGIPALFEATLEQIKQAGDNSLVFTNFVDFDSAYGHRRNVAGYAAALEYFDKRLPEVLELLQEDDVLILTADHGCDPTWEGTDHTREHIPVIVTGPKIPAGSLGRRETFADIGQSLAEYYGTSDMEYGKSFL</sequence>
<comment type="function">
    <text evidence="1">Isomerase that catalyzes the conversion of deoxy-ribose 1-phosphate (dRib-1-P) and ribose 1-phosphate (Rib-1-P) to deoxy-ribose 5-phosphate (dRib-5-P) and ribose 5-phosphate (Rib-5-P), respectively.</text>
</comment>
<comment type="catalytic activity">
    <reaction evidence="1">
        <text>2-deoxy-alpha-D-ribose 1-phosphate = 2-deoxy-D-ribose 5-phosphate</text>
        <dbReference type="Rhea" id="RHEA:27658"/>
        <dbReference type="ChEBI" id="CHEBI:57259"/>
        <dbReference type="ChEBI" id="CHEBI:62877"/>
        <dbReference type="EC" id="5.4.2.7"/>
    </reaction>
</comment>
<comment type="catalytic activity">
    <reaction evidence="1">
        <text>alpha-D-ribose 1-phosphate = D-ribose 5-phosphate</text>
        <dbReference type="Rhea" id="RHEA:18793"/>
        <dbReference type="ChEBI" id="CHEBI:57720"/>
        <dbReference type="ChEBI" id="CHEBI:78346"/>
        <dbReference type="EC" id="5.4.2.7"/>
    </reaction>
</comment>
<comment type="cofactor">
    <cofactor evidence="1">
        <name>Mn(2+)</name>
        <dbReference type="ChEBI" id="CHEBI:29035"/>
    </cofactor>
    <text evidence="1">Binds 2 manganese ions.</text>
</comment>
<comment type="pathway">
    <text evidence="1">Carbohydrate degradation; 2-deoxy-D-ribose 1-phosphate degradation; D-glyceraldehyde 3-phosphate and acetaldehyde from 2-deoxy-alpha-D-ribose 1-phosphate: step 1/2.</text>
</comment>
<comment type="subcellular location">
    <subcellularLocation>
        <location evidence="1">Cytoplasm</location>
    </subcellularLocation>
</comment>
<comment type="similarity">
    <text evidence="1">Belongs to the phosphopentomutase family.</text>
</comment>
<name>DEOB_PHOPR</name>
<proteinExistence type="inferred from homology"/>
<keyword id="KW-0963">Cytoplasm</keyword>
<keyword id="KW-0413">Isomerase</keyword>
<keyword id="KW-0464">Manganese</keyword>
<keyword id="KW-0479">Metal-binding</keyword>
<keyword id="KW-1185">Reference proteome</keyword>